<sequence length="205" mass="23664">MAMQKLFTYIYEFIEYRKMVLLEEKVPYDKFVQMVLNTGFFRINAETLNHGIVSVFIFGANGKYVHHGGDMRTLLTNTLNEKKHYEELILIVDKPVLSKKNILDIIVEQRAANPTIVINIYPYHLFCINIPKVSAIPKHKLITQEEAQEFLGREYLQPQDLMQISASDPPVVWLGGRPGDFVQIERPSETAMHAVVIRFITKSKI</sequence>
<proteinExistence type="evidence at protein level"/>
<evidence type="ECO:0000250" key="1">
    <source>
        <dbReference type="UniProtKB" id="P19388"/>
    </source>
</evidence>
<evidence type="ECO:0000269" key="2">
    <source>
    </source>
</evidence>
<evidence type="ECO:0000303" key="3">
    <source>
    </source>
</evidence>
<evidence type="ECO:0000303" key="4">
    <source>
    </source>
</evidence>
<evidence type="ECO:0000305" key="5"/>
<evidence type="ECO:0007829" key="6">
    <source>
        <dbReference type="PDB" id="8Q3B"/>
    </source>
</evidence>
<reference key="1">
    <citation type="journal article" date="1995" name="Virology">
        <title>Analysis of the complete nucleotide sequence of African swine fever virus.</title>
        <authorList>
            <person name="Yanez R.J."/>
            <person name="Rodriguez J.M."/>
            <person name="Nogal M.L."/>
            <person name="Yuste L."/>
            <person name="Enriquez C."/>
            <person name="Rodriguez J.F."/>
            <person name="Vinuela E."/>
        </authorList>
    </citation>
    <scope>NUCLEOTIDE SEQUENCE [LARGE SCALE GENOMIC DNA]</scope>
</reference>
<reference key="2">
    <citation type="journal article" date="2013" name="Virus Res.">
        <title>African swine fever virus transcription.</title>
        <authorList>
            <person name="Rodriguez J.M."/>
            <person name="Salas M.L."/>
        </authorList>
    </citation>
    <scope>REVIEW</scope>
</reference>
<reference key="3">
    <citation type="journal article" date="2018" name="J. Virol.">
        <title>A Proteomic Atlas of the African Swine Fever Virus Particle.</title>
        <authorList>
            <person name="Alejo A."/>
            <person name="Matamoros T."/>
            <person name="Guerra M."/>
            <person name="Andres G."/>
        </authorList>
    </citation>
    <scope>SUBCELLULAR LOCATION</scope>
</reference>
<reference key="4">
    <citation type="journal article" date="2020" name="Biochem. Soc. Trans.">
        <title>Transcriptome view of a killer: African swine fever virus.</title>
        <authorList>
            <person name="Cackett G."/>
            <person name="Sykora M."/>
            <person name="Werner F."/>
        </authorList>
    </citation>
    <scope>REVIEW</scope>
</reference>
<organismHost>
    <name type="scientific">Ornithodoros</name>
    <name type="common">relapsing fever ticks</name>
    <dbReference type="NCBI Taxonomy" id="6937"/>
</organismHost>
<organismHost>
    <name type="scientific">Sus scrofa</name>
    <name type="common">Pig</name>
    <dbReference type="NCBI Taxonomy" id="9823"/>
</organismHost>
<accession>Q65181</accession>
<feature type="chain" id="PRO_0000373122" description="DNA-directed RNA polymerase RPB5 homolog">
    <location>
        <begin position="1"/>
        <end position="205"/>
    </location>
</feature>
<feature type="helix" evidence="6">
    <location>
        <begin position="2"/>
        <end position="16"/>
    </location>
</feature>
<feature type="strand" evidence="6">
    <location>
        <begin position="20"/>
        <end position="23"/>
    </location>
</feature>
<feature type="helix" evidence="6">
    <location>
        <begin position="28"/>
        <end position="38"/>
    </location>
</feature>
<feature type="strand" evidence="6">
    <location>
        <begin position="39"/>
        <end position="46"/>
    </location>
</feature>
<feature type="strand" evidence="6">
    <location>
        <begin position="52"/>
        <end position="58"/>
    </location>
</feature>
<feature type="strand" evidence="6">
    <location>
        <begin position="60"/>
        <end position="63"/>
    </location>
</feature>
<feature type="turn" evidence="6">
    <location>
        <begin position="64"/>
        <end position="66"/>
    </location>
</feature>
<feature type="helix" evidence="6">
    <location>
        <begin position="68"/>
        <end position="80"/>
    </location>
</feature>
<feature type="strand" evidence="6">
    <location>
        <begin position="81"/>
        <end position="83"/>
    </location>
</feature>
<feature type="strand" evidence="6">
    <location>
        <begin position="85"/>
        <end position="91"/>
    </location>
</feature>
<feature type="helix" evidence="6">
    <location>
        <begin position="94"/>
        <end position="97"/>
    </location>
</feature>
<feature type="helix" evidence="6">
    <location>
        <begin position="100"/>
        <end position="112"/>
    </location>
</feature>
<feature type="strand" evidence="6">
    <location>
        <begin position="116"/>
        <end position="121"/>
    </location>
</feature>
<feature type="helix" evidence="6">
    <location>
        <begin position="124"/>
        <end position="126"/>
    </location>
</feature>
<feature type="helix" evidence="6">
    <location>
        <begin position="130"/>
        <end position="132"/>
    </location>
</feature>
<feature type="strand" evidence="6">
    <location>
        <begin position="138"/>
        <end position="142"/>
    </location>
</feature>
<feature type="helix" evidence="6">
    <location>
        <begin position="144"/>
        <end position="154"/>
    </location>
</feature>
<feature type="helix" evidence="6">
    <location>
        <begin position="158"/>
        <end position="160"/>
    </location>
</feature>
<feature type="strand" evidence="6">
    <location>
        <begin position="161"/>
        <end position="165"/>
    </location>
</feature>
<feature type="helix" evidence="6">
    <location>
        <begin position="169"/>
        <end position="174"/>
    </location>
</feature>
<feature type="strand" evidence="6">
    <location>
        <begin position="181"/>
        <end position="187"/>
    </location>
</feature>
<feature type="strand" evidence="6">
    <location>
        <begin position="189"/>
        <end position="201"/>
    </location>
</feature>
<dbReference type="EMBL" id="U18466">
    <property type="protein sequence ID" value="AAA65337.1"/>
    <property type="molecule type" value="Genomic_DNA"/>
</dbReference>
<dbReference type="RefSeq" id="NP_042801.1">
    <property type="nucleotide sequence ID" value="NC_001659.2"/>
</dbReference>
<dbReference type="PDB" id="8Q3B">
    <property type="method" value="EM"/>
    <property type="resolution" value="2.69 A"/>
    <property type="chains" value="E=1-205"/>
</dbReference>
<dbReference type="PDB" id="8Q3K">
    <property type="method" value="EM"/>
    <property type="resolution" value="2.92 A"/>
    <property type="chains" value="E=1-205"/>
</dbReference>
<dbReference type="PDB" id="8XX4">
    <property type="method" value="EM"/>
    <property type="resolution" value="2.60 A"/>
    <property type="chains" value="D=1-205"/>
</dbReference>
<dbReference type="PDB" id="8XX5">
    <property type="method" value="EM"/>
    <property type="resolution" value="2.40 A"/>
    <property type="chains" value="D=1-205"/>
</dbReference>
<dbReference type="PDB" id="8XXP">
    <property type="method" value="EM"/>
    <property type="resolution" value="2.60 A"/>
    <property type="chains" value="D=1-205"/>
</dbReference>
<dbReference type="PDB" id="8XXT">
    <property type="method" value="EM"/>
    <property type="resolution" value="2.85 A"/>
    <property type="chains" value="D=1-205"/>
</dbReference>
<dbReference type="PDB" id="8XY6">
    <property type="method" value="EM"/>
    <property type="resolution" value="3.00 A"/>
    <property type="chains" value="D=1-205"/>
</dbReference>
<dbReference type="PDB" id="8Y0E">
    <property type="method" value="EM"/>
    <property type="resolution" value="3.00 A"/>
    <property type="chains" value="D=1-205"/>
</dbReference>
<dbReference type="PDB" id="8YQT">
    <property type="method" value="EM"/>
    <property type="resolution" value="2.56 A"/>
    <property type="chains" value="D=1-205"/>
</dbReference>
<dbReference type="PDB" id="8YQU">
    <property type="method" value="EM"/>
    <property type="resolution" value="2.85 A"/>
    <property type="chains" value="D=1-205"/>
</dbReference>
<dbReference type="PDB" id="8YQV">
    <property type="method" value="EM"/>
    <property type="resolution" value="2.67 A"/>
    <property type="chains" value="D=1-205"/>
</dbReference>
<dbReference type="PDB" id="8YQW">
    <property type="method" value="EM"/>
    <property type="resolution" value="2.68 A"/>
    <property type="chains" value="D=1-205"/>
</dbReference>
<dbReference type="PDB" id="8YQY">
    <property type="method" value="EM"/>
    <property type="resolution" value="3.68 A"/>
    <property type="chains" value="D=1-205"/>
</dbReference>
<dbReference type="PDB" id="8YQZ">
    <property type="method" value="EM"/>
    <property type="resolution" value="2.78 A"/>
    <property type="chains" value="D=1-205"/>
</dbReference>
<dbReference type="PDBsum" id="8Q3B"/>
<dbReference type="PDBsum" id="8Q3K"/>
<dbReference type="PDBsum" id="8XX4"/>
<dbReference type="PDBsum" id="8XX5"/>
<dbReference type="PDBsum" id="8XXP"/>
<dbReference type="PDBsum" id="8XXT"/>
<dbReference type="PDBsum" id="8XY6"/>
<dbReference type="PDBsum" id="8Y0E"/>
<dbReference type="PDBsum" id="8YQT"/>
<dbReference type="PDBsum" id="8YQU"/>
<dbReference type="PDBsum" id="8YQV"/>
<dbReference type="PDBsum" id="8YQW"/>
<dbReference type="PDBsum" id="8YQY"/>
<dbReference type="PDBsum" id="8YQZ"/>
<dbReference type="EMDB" id="EMD-18120"/>
<dbReference type="EMDB" id="EMD-18129"/>
<dbReference type="SMR" id="Q65181"/>
<dbReference type="GeneID" id="22220337"/>
<dbReference type="KEGG" id="vg:22220337"/>
<dbReference type="Proteomes" id="UP000000624">
    <property type="component" value="Segment"/>
</dbReference>
<dbReference type="GO" id="GO:0000428">
    <property type="term" value="C:DNA-directed RNA polymerase complex"/>
    <property type="evidence" value="ECO:0007669"/>
    <property type="project" value="UniProtKB-KW"/>
</dbReference>
<dbReference type="GO" id="GO:0030430">
    <property type="term" value="C:host cell cytoplasm"/>
    <property type="evidence" value="ECO:0007669"/>
    <property type="project" value="UniProtKB-SubCell"/>
</dbReference>
<dbReference type="GO" id="GO:0044423">
    <property type="term" value="C:virion component"/>
    <property type="evidence" value="ECO:0007669"/>
    <property type="project" value="UniProtKB-KW"/>
</dbReference>
<dbReference type="GO" id="GO:0003677">
    <property type="term" value="F:DNA binding"/>
    <property type="evidence" value="ECO:0007669"/>
    <property type="project" value="InterPro"/>
</dbReference>
<dbReference type="GO" id="GO:0003899">
    <property type="term" value="F:DNA-directed RNA polymerase activity"/>
    <property type="evidence" value="ECO:0007669"/>
    <property type="project" value="InterPro"/>
</dbReference>
<dbReference type="GO" id="GO:0006366">
    <property type="term" value="P:transcription by RNA polymerase II"/>
    <property type="evidence" value="ECO:0007669"/>
    <property type="project" value="TreeGrafter"/>
</dbReference>
<dbReference type="GO" id="GO:0006362">
    <property type="term" value="P:transcription elongation by RNA polymerase I"/>
    <property type="evidence" value="ECO:0007669"/>
    <property type="project" value="TreeGrafter"/>
</dbReference>
<dbReference type="GO" id="GO:0042797">
    <property type="term" value="P:tRNA transcription by RNA polymerase III"/>
    <property type="evidence" value="ECO:0007669"/>
    <property type="project" value="TreeGrafter"/>
</dbReference>
<dbReference type="GO" id="GO:0019083">
    <property type="term" value="P:viral transcription"/>
    <property type="evidence" value="ECO:0007669"/>
    <property type="project" value="UniProtKB-KW"/>
</dbReference>
<dbReference type="Gene3D" id="3.90.940.20">
    <property type="entry name" value="RPB5-like RNA polymerase subunit"/>
    <property type="match status" value="1"/>
</dbReference>
<dbReference type="InterPro" id="IPR014381">
    <property type="entry name" value="Arch_Rpo5/euc_Rpb5"/>
</dbReference>
<dbReference type="InterPro" id="IPR000783">
    <property type="entry name" value="RNA_pol_subH/Rpb5_C"/>
</dbReference>
<dbReference type="InterPro" id="IPR035913">
    <property type="entry name" value="RPB5-like_sf"/>
</dbReference>
<dbReference type="PANTHER" id="PTHR10535">
    <property type="entry name" value="DNA-DIRECTED RNA POLYMERASES I, II, AND III SUBUNIT RPABC1"/>
    <property type="match status" value="1"/>
</dbReference>
<dbReference type="PANTHER" id="PTHR10535:SF0">
    <property type="entry name" value="DNA-DIRECTED RNA POLYMERASES I, II, AND III SUBUNIT RPABC1"/>
    <property type="match status" value="1"/>
</dbReference>
<dbReference type="Pfam" id="PF01191">
    <property type="entry name" value="RNA_pol_Rpb5_C"/>
    <property type="match status" value="1"/>
</dbReference>
<dbReference type="SUPFAM" id="SSF55287">
    <property type="entry name" value="RPB5-like RNA polymerase subunit"/>
    <property type="match status" value="1"/>
</dbReference>
<organism>
    <name type="scientific">African swine fever virus (strain Badajoz 1971 Vero-adapted)</name>
    <name type="common">Ba71V</name>
    <name type="synonym">ASFV</name>
    <dbReference type="NCBI Taxonomy" id="10498"/>
    <lineage>
        <taxon>Viruses</taxon>
        <taxon>Varidnaviria</taxon>
        <taxon>Bamfordvirae</taxon>
        <taxon>Nucleocytoviricota</taxon>
        <taxon>Pokkesviricetes</taxon>
        <taxon>Asfuvirales</taxon>
        <taxon>Asfarviridae</taxon>
        <taxon>Asfivirus</taxon>
        <taxon>African swine fever virus</taxon>
    </lineage>
</organism>
<comment type="function">
    <text evidence="1">Component of the DNA-directed RNA polymerase (RNAP) that catalyzes the transcription in the cytoplasm of viral DNA into RNA using the four ribonucleoside triphosphates as substrates.</text>
</comment>
<comment type="subunit">
    <text evidence="4">Part of the viral DNA-directed RNA polymerase that consists of 8 polII-like subunits (RPB1, RPB2, RPB3, RPB5, RPB6, RPB7, RPB9, RPB10), a capping enzyme and a termination factor.</text>
</comment>
<comment type="subcellular location">
    <subcellularLocation>
        <location evidence="5">Host cytoplasm</location>
    </subcellularLocation>
    <subcellularLocation>
        <location evidence="2">Virion</location>
    </subcellularLocation>
    <text evidence="2">Found in association with viral nucleoid.</text>
</comment>
<comment type="similarity">
    <text evidence="5">Belongs to the archaeal RpoH/eukaryotic RPB5 RNA polymerase subunit family.</text>
</comment>
<gene>
    <name type="ordered locus">Ba71V-108</name>
    <name type="ORF">D205R</name>
</gene>
<keyword id="KW-0002">3D-structure</keyword>
<keyword id="KW-0240">DNA-directed RNA polymerase</keyword>
<keyword id="KW-1035">Host cytoplasm</keyword>
<keyword id="KW-1185">Reference proteome</keyword>
<keyword id="KW-0804">Transcription</keyword>
<keyword id="KW-1195">Viral transcription</keyword>
<keyword id="KW-0946">Virion</keyword>
<protein>
    <recommendedName>
        <fullName evidence="3 4">DNA-directed RNA polymerase RPB5 homolog</fullName>
        <shortName evidence="5">RPB5 homolog</shortName>
    </recommendedName>
</protein>
<name>RPB5_ASFB7</name>